<reference key="1">
    <citation type="journal article" date="2000" name="DNA Res.">
        <title>Structural analysis of Arabidopsis thaliana chromosome 3. II. Sequence features of the 4,251,695 bp regions covered by 90 P1, TAC and BAC clones.</title>
        <authorList>
            <person name="Kaneko T."/>
            <person name="Katoh T."/>
            <person name="Sato S."/>
            <person name="Nakamura Y."/>
            <person name="Asamizu E."/>
            <person name="Tabata S."/>
        </authorList>
    </citation>
    <scope>NUCLEOTIDE SEQUENCE [LARGE SCALE GENOMIC DNA]</scope>
    <source>
        <strain>cv. Columbia</strain>
    </source>
</reference>
<reference key="2">
    <citation type="journal article" date="2017" name="Plant J.">
        <title>Araport11: a complete reannotation of the Arabidopsis thaliana reference genome.</title>
        <authorList>
            <person name="Cheng C.Y."/>
            <person name="Krishnakumar V."/>
            <person name="Chan A.P."/>
            <person name="Thibaud-Nissen F."/>
            <person name="Schobel S."/>
            <person name="Town C.D."/>
        </authorList>
    </citation>
    <scope>GENOME REANNOTATION</scope>
    <source>
        <strain>cv. Columbia</strain>
    </source>
</reference>
<reference key="3">
    <citation type="journal article" date="2003" name="Science">
        <title>Empirical analysis of transcriptional activity in the Arabidopsis genome.</title>
        <authorList>
            <person name="Yamada K."/>
            <person name="Lim J."/>
            <person name="Dale J.M."/>
            <person name="Chen H."/>
            <person name="Shinn P."/>
            <person name="Palm C.J."/>
            <person name="Southwick A.M."/>
            <person name="Wu H.C."/>
            <person name="Kim C.J."/>
            <person name="Nguyen M."/>
            <person name="Pham P.K."/>
            <person name="Cheuk R.F."/>
            <person name="Karlin-Newmann G."/>
            <person name="Liu S.X."/>
            <person name="Lam B."/>
            <person name="Sakano H."/>
            <person name="Wu T."/>
            <person name="Yu G."/>
            <person name="Miranda M."/>
            <person name="Quach H.L."/>
            <person name="Tripp M."/>
            <person name="Chang C.H."/>
            <person name="Lee J.M."/>
            <person name="Toriumi M.J."/>
            <person name="Chan M.M."/>
            <person name="Tang C.C."/>
            <person name="Onodera C.S."/>
            <person name="Deng J.M."/>
            <person name="Akiyama K."/>
            <person name="Ansari Y."/>
            <person name="Arakawa T."/>
            <person name="Banh J."/>
            <person name="Banno F."/>
            <person name="Bowser L."/>
            <person name="Brooks S.Y."/>
            <person name="Carninci P."/>
            <person name="Chao Q."/>
            <person name="Choy N."/>
            <person name="Enju A."/>
            <person name="Goldsmith A.D."/>
            <person name="Gurjal M."/>
            <person name="Hansen N.F."/>
            <person name="Hayashizaki Y."/>
            <person name="Johnson-Hopson C."/>
            <person name="Hsuan V.W."/>
            <person name="Iida K."/>
            <person name="Karnes M."/>
            <person name="Khan S."/>
            <person name="Koesema E."/>
            <person name="Ishida J."/>
            <person name="Jiang P.X."/>
            <person name="Jones T."/>
            <person name="Kawai J."/>
            <person name="Kamiya A."/>
            <person name="Meyers C."/>
            <person name="Nakajima M."/>
            <person name="Narusaka M."/>
            <person name="Seki M."/>
            <person name="Sakurai T."/>
            <person name="Satou M."/>
            <person name="Tamse R."/>
            <person name="Vaysberg M."/>
            <person name="Wallender E.K."/>
            <person name="Wong C."/>
            <person name="Yamamura Y."/>
            <person name="Yuan S."/>
            <person name="Shinozaki K."/>
            <person name="Davis R.W."/>
            <person name="Theologis A."/>
            <person name="Ecker J.R."/>
        </authorList>
    </citation>
    <scope>NUCLEOTIDE SEQUENCE [LARGE SCALE MRNA]</scope>
    <source>
        <strain>cv. Columbia</strain>
    </source>
</reference>
<reference key="4">
    <citation type="journal article" date="2009" name="DNA Res.">
        <title>Analysis of multiple occurrences of alternative splicing events in Arabidopsis thaliana using novel sequenced full-length cDNAs.</title>
        <authorList>
            <person name="Iida K."/>
            <person name="Fukami-Kobayashi K."/>
            <person name="Toyoda A."/>
            <person name="Sakaki Y."/>
            <person name="Kobayashi M."/>
            <person name="Seki M."/>
            <person name="Shinozaki K."/>
        </authorList>
    </citation>
    <scope>NUCLEOTIDE SEQUENCE [LARGE SCALE MRNA]</scope>
    <source>
        <strain>cv. Columbia</strain>
        <tissue>Rosette leaf</tissue>
    </source>
</reference>
<reference key="5">
    <citation type="journal article" date="2004" name="Planta">
        <title>PCC1: a merging point for pathogen defence and circadian signalling in Arabidopsis.</title>
        <authorList>
            <person name="Sauerbrunn N."/>
            <person name="Schlaich N.L."/>
        </authorList>
    </citation>
    <scope>FUNCTION</scope>
    <scope>INDUCTION BY PATHOGEN</scope>
</reference>
<reference key="6">
    <citation type="journal article" date="2010" name="Bioinformatics">
        <title>CYSTM, a novel cysteine-rich transmembrane module with a role in stress tolerance across eukaryotes.</title>
        <authorList>
            <person name="Venancio T.M."/>
            <person name="Aravind L."/>
        </authorList>
    </citation>
    <scope>TOPOLOGY</scope>
    <scope>SUBCELLULAR LOCATION</scope>
    <scope>GENE FAMILY</scope>
</reference>
<reference key="7">
    <citation type="journal article" date="2010" name="Plant Cell Environ.">
        <title>Genome-wide analyses of the transcriptomes of salicylic acid-deficient versus wild-type plants uncover Pathogen and Circadian Controlled 1 (PCC1) as a regulator of flowering time in Arabidopsis.</title>
        <authorList>
            <person name="Segarra S."/>
            <person name="Mir R."/>
            <person name="Martinez C."/>
            <person name="Leon J."/>
        </authorList>
    </citation>
    <scope>FUNCTION</scope>
    <scope>DISRUPTION PHENOTYPE</scope>
    <scope>INDUCTION BY UV</scope>
    <scope>DEVELOPMENTAL STAGE</scope>
    <scope>TISSUE SPECIFICITY</scope>
    <source>
        <strain>cv. Columbia</strain>
    </source>
</reference>
<reference key="8">
    <citation type="journal article" date="2012" name="J. Exp. Bot.">
        <title>Identification of lipids and lipid-binding proteins in phloem exudates from Arabidopsis thaliana.</title>
        <authorList>
            <person name="Guelette B.S."/>
            <person name="Benning U.F."/>
            <person name="Hoffmann-Benning S."/>
        </authorList>
    </citation>
    <scope>TISSUE SPECIFICITY</scope>
</reference>
<reference key="9">
    <citation type="journal article" date="2013" name="J. Exp. Bot.">
        <title>Pathogen and Circadian Controlled 1 (PCC1) regulates polar lipid content, ABA-related responses, and pathogen defence in Arabidopsis thaliana.</title>
        <authorList>
            <person name="Mir R."/>
            <person name="Hernandez M.L."/>
            <person name="Abou-Mansour E."/>
            <person name="Martinez-Rivas J.M."/>
            <person name="Mauch F."/>
            <person name="Metraux J.-P."/>
            <person name="Leon J."/>
        </authorList>
    </citation>
    <scope>FUNCTION</scope>
    <scope>DISRUPTION PHENOTYPE</scope>
    <source>
        <strain>cv. Columbia</strain>
    </source>
</reference>
<gene>
    <name type="primary">PCC1</name>
    <name type="ordered locus">At3g22231</name>
    <name type="ORF">MKA23</name>
</gene>
<comment type="function">
    <text evidence="3 4 6">Modulates resistance against pathogens including oomycetes (e.g. Hyaloperonospora parasitica and Phytophthora brassicae) and fungi (e.g. Phytophthora brassicae). Controls the abscisic acid-mediated (ABA) signaling pathways. Regulator of the flowering time in response to stress (e.g. UV-C). Regulates polar lipid content; promotes phosphatidylinositol (PI) and 18:0 but prevents 18:2 and 18:3 polar lipids accumulation.</text>
</comment>
<comment type="subcellular location">
    <subcellularLocation>
        <location evidence="8">Cell membrane</location>
        <topology evidence="1">Single-pass membrane protein</topology>
    </subcellularLocation>
</comment>
<comment type="tissue specificity">
    <text evidence="4 5">Expressed at very low levels in seedlings and petioles, and at higher levels in leaves. Also present in phloem sap.</text>
</comment>
<comment type="developmental stage">
    <text evidence="4">Low expression after germination followed by an abrupt level increase in 10-days old seedlings. Accumulates in senescent leaves.</text>
</comment>
<comment type="induction">
    <text evidence="3 4">Rapidly up-regulated after pathogen exposure (e.g. avirulent and virulent Pseudomonas syringae pv. tomato) in a salicylic acid (SA) defense-signaling pathway-dependent manner. Circadian-regulation with accumulation during the light period, peaks of expression at the end of the day, and low levels during the dark period. Up-regulated by UV-C light through a SA-dependent process and in a CONSTANS- (CO) dependent manner.</text>
</comment>
<comment type="disruption phenotype">
    <text evidence="4 6">Late flowering and defective in UV-C light acceleration of flowering. Strong reduction of FLOWERING LOCUS T (FT) expression. Hypersensitivity to abscisic acid (ABA) and alterations in polar lipid contents and their corresponding fatty acids; reduced levels of phosphatidylinositol (PI) and of 18:0, but increased levels of 18:2 and 18:3 polar lipids. Increased susceptibility to the hemi-biotrophic oomycete pathogen Phytophthora brassicae but enhanced resistance to the necrotrophic fungal pathogen Botrytis cinerea.</text>
</comment>
<comment type="similarity">
    <text evidence="7">Belongs to the CYSTM1 family.</text>
</comment>
<comment type="sequence caution" evidence="7">
    <conflict type="erroneous gene model prediction">
        <sequence resource="EMBL-CDS" id="BAB03071"/>
    </conflict>
</comment>
<sequence>MNQSAQNYFSVQKPSETSSGPYTSPPPIGYPTRDAVVGDPPAAAVETNSKGVNPEAIMSCFSTCMECIFCCGVCSSLCTSE</sequence>
<dbReference type="EMBL" id="AP001306">
    <property type="protein sequence ID" value="BAB03071.1"/>
    <property type="status" value="ALT_SEQ"/>
    <property type="molecule type" value="Genomic_DNA"/>
</dbReference>
<dbReference type="EMBL" id="CP002686">
    <property type="protein sequence ID" value="AEE76608.1"/>
    <property type="molecule type" value="Genomic_DNA"/>
</dbReference>
<dbReference type="EMBL" id="AY037207">
    <property type="protein sequence ID" value="AAK59792.1"/>
    <property type="molecule type" value="mRNA"/>
</dbReference>
<dbReference type="EMBL" id="BT002668">
    <property type="protein sequence ID" value="AAO11584.1"/>
    <property type="molecule type" value="mRNA"/>
</dbReference>
<dbReference type="EMBL" id="AK316896">
    <property type="protein sequence ID" value="BAH19603.1"/>
    <property type="molecule type" value="mRNA"/>
</dbReference>
<dbReference type="EMBL" id="AK317758">
    <property type="protein sequence ID" value="BAH20414.1"/>
    <property type="molecule type" value="mRNA"/>
</dbReference>
<dbReference type="RefSeq" id="NP_566702.1">
    <property type="nucleotide sequence ID" value="NM_113121.5"/>
</dbReference>
<dbReference type="SMR" id="Q94C26"/>
<dbReference type="BioGRID" id="7120">
    <property type="interactions" value="3"/>
</dbReference>
<dbReference type="FunCoup" id="Q94C26">
    <property type="interactions" value="23"/>
</dbReference>
<dbReference type="STRING" id="3702.Q94C26"/>
<dbReference type="iPTMnet" id="Q94C26"/>
<dbReference type="PaxDb" id="3702-AT3G22231.1"/>
<dbReference type="ProteomicsDB" id="236285"/>
<dbReference type="EnsemblPlants" id="AT3G22231.1">
    <property type="protein sequence ID" value="AT3G22231.1"/>
    <property type="gene ID" value="AT3G22231"/>
</dbReference>
<dbReference type="GeneID" id="821788"/>
<dbReference type="Gramene" id="AT3G22231.1">
    <property type="protein sequence ID" value="AT3G22231.1"/>
    <property type="gene ID" value="AT3G22231"/>
</dbReference>
<dbReference type="KEGG" id="ath:AT3G22231"/>
<dbReference type="Araport" id="AT3G22231"/>
<dbReference type="TAIR" id="AT3G22231">
    <property type="gene designation" value="PCC1"/>
</dbReference>
<dbReference type="HOGENOM" id="CLU_128451_4_0_1"/>
<dbReference type="InParanoid" id="Q94C26"/>
<dbReference type="PhylomeDB" id="Q94C26"/>
<dbReference type="PRO" id="PR:Q94C26"/>
<dbReference type="Proteomes" id="UP000006548">
    <property type="component" value="Chromosome 3"/>
</dbReference>
<dbReference type="ExpressionAtlas" id="Q94C26">
    <property type="expression patterns" value="baseline and differential"/>
</dbReference>
<dbReference type="GO" id="GO:0016020">
    <property type="term" value="C:membrane"/>
    <property type="evidence" value="ECO:0000304"/>
    <property type="project" value="UniProtKB"/>
</dbReference>
<dbReference type="GO" id="GO:0005886">
    <property type="term" value="C:plasma membrane"/>
    <property type="evidence" value="ECO:0007005"/>
    <property type="project" value="TAIR"/>
</dbReference>
<dbReference type="GO" id="GO:0009738">
    <property type="term" value="P:abscisic acid-activated signaling pathway"/>
    <property type="evidence" value="ECO:0007669"/>
    <property type="project" value="UniProtKB-KW"/>
</dbReference>
<dbReference type="GO" id="GO:0071494">
    <property type="term" value="P:cellular response to UV-C"/>
    <property type="evidence" value="ECO:0000314"/>
    <property type="project" value="UniProtKB"/>
</dbReference>
<dbReference type="GO" id="GO:0007623">
    <property type="term" value="P:circadian rhythm"/>
    <property type="evidence" value="ECO:0000314"/>
    <property type="project" value="UniProtKB"/>
</dbReference>
<dbReference type="GO" id="GO:0006952">
    <property type="term" value="P:defense response"/>
    <property type="evidence" value="ECO:0007669"/>
    <property type="project" value="UniProtKB-KW"/>
</dbReference>
<dbReference type="GO" id="GO:0055088">
    <property type="term" value="P:lipid homeostasis"/>
    <property type="evidence" value="ECO:0000315"/>
    <property type="project" value="UniProtKB"/>
</dbReference>
<dbReference type="GO" id="GO:0006629">
    <property type="term" value="P:lipid metabolic process"/>
    <property type="evidence" value="ECO:0007669"/>
    <property type="project" value="UniProtKB-KW"/>
</dbReference>
<dbReference type="GO" id="GO:1902290">
    <property type="term" value="P:positive regulation of defense response to oomycetes"/>
    <property type="evidence" value="ECO:0000315"/>
    <property type="project" value="UniProtKB"/>
</dbReference>
<dbReference type="GO" id="GO:0010513">
    <property type="term" value="P:positive regulation of phosphatidylinositol biosynthetic process"/>
    <property type="evidence" value="ECO:0000315"/>
    <property type="project" value="UniProtKB"/>
</dbReference>
<dbReference type="GO" id="GO:1900150">
    <property type="term" value="P:regulation of defense response to fungus"/>
    <property type="evidence" value="ECO:0000315"/>
    <property type="project" value="UniProtKB"/>
</dbReference>
<dbReference type="GO" id="GO:0046890">
    <property type="term" value="P:regulation of lipid biosynthetic process"/>
    <property type="evidence" value="ECO:0000315"/>
    <property type="project" value="UniProtKB"/>
</dbReference>
<dbReference type="GO" id="GO:2000028">
    <property type="term" value="P:regulation of photoperiodism, flowering"/>
    <property type="evidence" value="ECO:0000315"/>
    <property type="project" value="UniProtKB"/>
</dbReference>
<dbReference type="GO" id="GO:0009737">
    <property type="term" value="P:response to abscisic acid"/>
    <property type="evidence" value="ECO:0000315"/>
    <property type="project" value="UniProtKB"/>
</dbReference>
<dbReference type="GO" id="GO:0009617">
    <property type="term" value="P:response to bacterium"/>
    <property type="evidence" value="ECO:0000314"/>
    <property type="project" value="UniProtKB"/>
</dbReference>
<dbReference type="GO" id="GO:0009863">
    <property type="term" value="P:salicylic acid mediated signaling pathway"/>
    <property type="evidence" value="ECO:0000315"/>
    <property type="project" value="UniProtKB"/>
</dbReference>
<dbReference type="InterPro" id="IPR028144">
    <property type="entry name" value="CYSTM_dom"/>
</dbReference>
<dbReference type="Pfam" id="PF12734">
    <property type="entry name" value="CYSTM"/>
    <property type="match status" value="1"/>
</dbReference>
<protein>
    <recommendedName>
        <fullName>Cysteine-rich and transmembrane domain-containing protein PCC1</fullName>
    </recommendedName>
    <alternativeName>
        <fullName>Protein PATHOGEN AND CIRCADIAN CONTROLLED 1</fullName>
    </alternativeName>
</protein>
<feature type="chain" id="PRO_0000430168" description="Cysteine-rich and transmembrane domain-containing protein PCC1">
    <location>
        <begin position="1"/>
        <end position="81"/>
    </location>
</feature>
<feature type="transmembrane region" description="Helical">
    <location>
        <begin position="56"/>
        <end position="74"/>
    </location>
</feature>
<feature type="region of interest" description="Disordered" evidence="2">
    <location>
        <begin position="1"/>
        <end position="34"/>
    </location>
</feature>
<feature type="compositionally biased region" description="Polar residues" evidence="2">
    <location>
        <begin position="1"/>
        <end position="22"/>
    </location>
</feature>
<keyword id="KW-0938">Abscisic acid signaling pathway</keyword>
<keyword id="KW-1003">Cell membrane</keyword>
<keyword id="KW-0443">Lipid metabolism</keyword>
<keyword id="KW-0472">Membrane</keyword>
<keyword id="KW-0611">Plant defense</keyword>
<keyword id="KW-1185">Reference proteome</keyword>
<keyword id="KW-0812">Transmembrane</keyword>
<keyword id="KW-1133">Transmembrane helix</keyword>
<proteinExistence type="evidence at protein level"/>
<name>PCC1_ARATH</name>
<evidence type="ECO:0000255" key="1"/>
<evidence type="ECO:0000256" key="2">
    <source>
        <dbReference type="SAM" id="MobiDB-lite"/>
    </source>
</evidence>
<evidence type="ECO:0000269" key="3">
    <source>
    </source>
</evidence>
<evidence type="ECO:0000269" key="4">
    <source>
    </source>
</evidence>
<evidence type="ECO:0000269" key="5">
    <source>
    </source>
</evidence>
<evidence type="ECO:0000269" key="6">
    <source>
    </source>
</evidence>
<evidence type="ECO:0000305" key="7"/>
<evidence type="ECO:0000305" key="8">
    <source>
    </source>
</evidence>
<organism>
    <name type="scientific">Arabidopsis thaliana</name>
    <name type="common">Mouse-ear cress</name>
    <dbReference type="NCBI Taxonomy" id="3702"/>
    <lineage>
        <taxon>Eukaryota</taxon>
        <taxon>Viridiplantae</taxon>
        <taxon>Streptophyta</taxon>
        <taxon>Embryophyta</taxon>
        <taxon>Tracheophyta</taxon>
        <taxon>Spermatophyta</taxon>
        <taxon>Magnoliopsida</taxon>
        <taxon>eudicotyledons</taxon>
        <taxon>Gunneridae</taxon>
        <taxon>Pentapetalae</taxon>
        <taxon>rosids</taxon>
        <taxon>malvids</taxon>
        <taxon>Brassicales</taxon>
        <taxon>Brassicaceae</taxon>
        <taxon>Camelineae</taxon>
        <taxon>Arabidopsis</taxon>
    </lineage>
</organism>
<accession>Q94C26</accession>
<accession>Q9LID9</accession>